<name>UVRA_AQUAE</name>
<sequence>MDRIVIRGARQHNLKNIDVEIPKNKLVVITGPSGSGKSSLAFDTLYAEGQRRYVESLSAYARQFLGVMEKPEVDSIEGLSPAIAIDQKTTSKNPRSTVGTVTEIYDYLRVLWANVGKPHCPHCGNLLSGLSAHEILDRIVEKYKGKRVMILSPIVRGKKGEFRELLRQIEKWGYSRVKVDGELRRVIEVPPLEKNKKHTIELVIDRLTVSEEERARLLEDVEKALEFSSGLVKIEEVESGKEELFSEKLVCPEHGFSIPELSARLFSFNSPYGACPSCKGLGVKWEIDPAVLIDPEKPAVKAVKIVESGYFNYLRFPIANVIRKLGYDPRTPWKKLPESVRATVLYGSESLNFEGIIPHLERRFLEEESERIREEIEDYIVEKPCPECKGARLRKEALAVLIDGKSIWDVVNMPVGKAKEFFEELYEKLEGKEKIIADRLLKEIIERLGFLVNVGLDYLSLSRSATTLSGGEMQRIRLATQLGSKLTGVLYVLDEPSIGLHPRDTSKLINTLKGLRDLGNTVVVVEHDPETIESADHVIELGPGAGKHGGYLVAQGTVEEIKSHPSSLTGAYLSGRKEIPVPKERRKPSGKFIRIVRAKEHNLKNINVDIPLGLFVCITGVSGSGKSTLIYDILYKYAKNYFYGTHEQVGEVEKIEGLENIDKVINIDQSPIGRTPRSNPATYTKVFDLIRNLFAQTPEAKARGYKPGRFSFNVKGGRCEACQGEGVIKVEMHFLPPVYVTCEVCKGKRYNRETLEITYKGKNIADVLEMTVDEAYDFFENHPAIRRKLQILKDVGLGYIKLGQPAPTLSGGEAQRIKLARELSKKETGRTLYLLDEPTTGLHMDDVKKLIDVLQRLVDKGNTVVVIEHNLDVIKCADWIIDLGPEGGERGGQVVAVGTPEEVAQNPNSYTGKYLRKYLKKETLKV</sequence>
<organism>
    <name type="scientific">Aquifex aeolicus (strain VF5)</name>
    <dbReference type="NCBI Taxonomy" id="224324"/>
    <lineage>
        <taxon>Bacteria</taxon>
        <taxon>Pseudomonadati</taxon>
        <taxon>Aquificota</taxon>
        <taxon>Aquificia</taxon>
        <taxon>Aquificales</taxon>
        <taxon>Aquificaceae</taxon>
        <taxon>Aquifex</taxon>
    </lineage>
</organism>
<feature type="chain" id="PRO_0000093033" description="UvrABC system protein A">
    <location>
        <begin position="1"/>
        <end position="926"/>
    </location>
</feature>
<feature type="domain" description="ABC transporter 1" evidence="1">
    <location>
        <begin position="308"/>
        <end position="568"/>
    </location>
</feature>
<feature type="domain" description="ABC transporter 2" evidence="1">
    <location>
        <begin position="588"/>
        <end position="916"/>
    </location>
</feature>
<feature type="zinc finger region" description="C4-type" evidence="1">
    <location>
        <begin position="251"/>
        <end position="278"/>
    </location>
</feature>
<feature type="zinc finger region" description="C4-type" evidence="1">
    <location>
        <begin position="719"/>
        <end position="745"/>
    </location>
</feature>
<feature type="binding site" evidence="1">
    <location>
        <begin position="31"/>
        <end position="38"/>
    </location>
    <ligand>
        <name>ATP</name>
        <dbReference type="ChEBI" id="CHEBI:30616"/>
        <label>1</label>
    </ligand>
</feature>
<feature type="binding site" evidence="1">
    <location>
        <begin position="620"/>
        <end position="627"/>
    </location>
    <ligand>
        <name>ATP</name>
        <dbReference type="ChEBI" id="CHEBI:30616"/>
        <label>2</label>
    </ligand>
</feature>
<accession>O66911</accession>
<comment type="function">
    <text evidence="1">The UvrABC repair system catalyzes the recognition and processing of DNA lesions. UvrA is an ATPase and a DNA-binding protein. A damage recognition complex composed of 2 UvrA and 2 UvrB subunits scans DNA for abnormalities. When the presence of a lesion has been verified by UvrB, the UvrA molecules dissociate.</text>
</comment>
<comment type="subunit">
    <text evidence="1">Forms a heterotetramer with UvrB during the search for lesions.</text>
</comment>
<comment type="subcellular location">
    <subcellularLocation>
        <location evidence="1">Cytoplasm</location>
    </subcellularLocation>
</comment>
<comment type="similarity">
    <text evidence="1">Belongs to the ABC transporter superfamily. UvrA family.</text>
</comment>
<keyword id="KW-0067">ATP-binding</keyword>
<keyword id="KW-0963">Cytoplasm</keyword>
<keyword id="KW-0227">DNA damage</keyword>
<keyword id="KW-0228">DNA excision</keyword>
<keyword id="KW-0234">DNA repair</keyword>
<keyword id="KW-0238">DNA-binding</keyword>
<keyword id="KW-0267">Excision nuclease</keyword>
<keyword id="KW-0479">Metal-binding</keyword>
<keyword id="KW-0547">Nucleotide-binding</keyword>
<keyword id="KW-1185">Reference proteome</keyword>
<keyword id="KW-0677">Repeat</keyword>
<keyword id="KW-0742">SOS response</keyword>
<keyword id="KW-0862">Zinc</keyword>
<keyword id="KW-0863">Zinc-finger</keyword>
<gene>
    <name evidence="1" type="primary">uvrA</name>
    <name type="ordered locus">aq_686</name>
</gene>
<proteinExistence type="inferred from homology"/>
<dbReference type="EMBL" id="AE000657">
    <property type="protein sequence ID" value="AAC06874.1"/>
    <property type="molecule type" value="Genomic_DNA"/>
</dbReference>
<dbReference type="PIR" id="C70360">
    <property type="entry name" value="C70360"/>
</dbReference>
<dbReference type="RefSeq" id="NP_213471.1">
    <property type="nucleotide sequence ID" value="NC_000918.1"/>
</dbReference>
<dbReference type="RefSeq" id="WP_010880409.1">
    <property type="nucleotide sequence ID" value="NC_000918.1"/>
</dbReference>
<dbReference type="SMR" id="O66911"/>
<dbReference type="FunCoup" id="O66911">
    <property type="interactions" value="273"/>
</dbReference>
<dbReference type="STRING" id="224324.aq_686"/>
<dbReference type="EnsemblBacteria" id="AAC06874">
    <property type="protein sequence ID" value="AAC06874"/>
    <property type="gene ID" value="aq_686"/>
</dbReference>
<dbReference type="KEGG" id="aae:aq_686"/>
<dbReference type="PATRIC" id="fig|224324.8.peg.553"/>
<dbReference type="eggNOG" id="COG0178">
    <property type="taxonomic scope" value="Bacteria"/>
</dbReference>
<dbReference type="HOGENOM" id="CLU_001370_0_2_0"/>
<dbReference type="InParanoid" id="O66911"/>
<dbReference type="OrthoDB" id="9809851at2"/>
<dbReference type="Proteomes" id="UP000000798">
    <property type="component" value="Chromosome"/>
</dbReference>
<dbReference type="GO" id="GO:0005737">
    <property type="term" value="C:cytoplasm"/>
    <property type="evidence" value="ECO:0007669"/>
    <property type="project" value="UniProtKB-SubCell"/>
</dbReference>
<dbReference type="GO" id="GO:0009380">
    <property type="term" value="C:excinuclease repair complex"/>
    <property type="evidence" value="ECO:0007669"/>
    <property type="project" value="InterPro"/>
</dbReference>
<dbReference type="GO" id="GO:0005524">
    <property type="term" value="F:ATP binding"/>
    <property type="evidence" value="ECO:0007669"/>
    <property type="project" value="UniProtKB-UniRule"/>
</dbReference>
<dbReference type="GO" id="GO:0016887">
    <property type="term" value="F:ATP hydrolysis activity"/>
    <property type="evidence" value="ECO:0007669"/>
    <property type="project" value="InterPro"/>
</dbReference>
<dbReference type="GO" id="GO:0003677">
    <property type="term" value="F:DNA binding"/>
    <property type="evidence" value="ECO:0007669"/>
    <property type="project" value="UniProtKB-UniRule"/>
</dbReference>
<dbReference type="GO" id="GO:0009381">
    <property type="term" value="F:excinuclease ABC activity"/>
    <property type="evidence" value="ECO:0007669"/>
    <property type="project" value="UniProtKB-UniRule"/>
</dbReference>
<dbReference type="GO" id="GO:0008270">
    <property type="term" value="F:zinc ion binding"/>
    <property type="evidence" value="ECO:0007669"/>
    <property type="project" value="UniProtKB-UniRule"/>
</dbReference>
<dbReference type="GO" id="GO:0006289">
    <property type="term" value="P:nucleotide-excision repair"/>
    <property type="evidence" value="ECO:0007669"/>
    <property type="project" value="UniProtKB-UniRule"/>
</dbReference>
<dbReference type="GO" id="GO:0009432">
    <property type="term" value="P:SOS response"/>
    <property type="evidence" value="ECO:0007669"/>
    <property type="project" value="UniProtKB-UniRule"/>
</dbReference>
<dbReference type="CDD" id="cd03270">
    <property type="entry name" value="ABC_UvrA_I"/>
    <property type="match status" value="1"/>
</dbReference>
<dbReference type="CDD" id="cd03271">
    <property type="entry name" value="ABC_UvrA_II"/>
    <property type="match status" value="1"/>
</dbReference>
<dbReference type="FunFam" id="1.20.1580.10:FF:000002">
    <property type="entry name" value="UvrABC system protein A"/>
    <property type="match status" value="1"/>
</dbReference>
<dbReference type="FunFam" id="3.40.50.300:FF:000028">
    <property type="entry name" value="UvrABC system protein A"/>
    <property type="match status" value="1"/>
</dbReference>
<dbReference type="Gene3D" id="1.10.8.280">
    <property type="entry name" value="ABC transporter ATPase domain-like"/>
    <property type="match status" value="1"/>
</dbReference>
<dbReference type="Gene3D" id="1.20.1580.10">
    <property type="entry name" value="ABC transporter ATPase like domain"/>
    <property type="match status" value="2"/>
</dbReference>
<dbReference type="Gene3D" id="3.30.1490.20">
    <property type="entry name" value="ATP-grasp fold, A domain"/>
    <property type="match status" value="1"/>
</dbReference>
<dbReference type="Gene3D" id="3.40.50.300">
    <property type="entry name" value="P-loop containing nucleotide triphosphate hydrolases"/>
    <property type="match status" value="2"/>
</dbReference>
<dbReference type="HAMAP" id="MF_00205">
    <property type="entry name" value="UvrA"/>
    <property type="match status" value="1"/>
</dbReference>
<dbReference type="InterPro" id="IPR003593">
    <property type="entry name" value="AAA+_ATPase"/>
</dbReference>
<dbReference type="InterPro" id="IPR003439">
    <property type="entry name" value="ABC_transporter-like_ATP-bd"/>
</dbReference>
<dbReference type="InterPro" id="IPR017871">
    <property type="entry name" value="ABC_transporter-like_CS"/>
</dbReference>
<dbReference type="InterPro" id="IPR013815">
    <property type="entry name" value="ATP_grasp_subdomain_1"/>
</dbReference>
<dbReference type="InterPro" id="IPR027417">
    <property type="entry name" value="P-loop_NTPase"/>
</dbReference>
<dbReference type="InterPro" id="IPR004602">
    <property type="entry name" value="UvrA"/>
</dbReference>
<dbReference type="InterPro" id="IPR041552">
    <property type="entry name" value="UvrA_DNA-bd"/>
</dbReference>
<dbReference type="InterPro" id="IPR041102">
    <property type="entry name" value="UvrA_inter"/>
</dbReference>
<dbReference type="NCBIfam" id="NF001503">
    <property type="entry name" value="PRK00349.1"/>
    <property type="match status" value="1"/>
</dbReference>
<dbReference type="NCBIfam" id="TIGR00630">
    <property type="entry name" value="uvra"/>
    <property type="match status" value="1"/>
</dbReference>
<dbReference type="PANTHER" id="PTHR43152">
    <property type="entry name" value="UVRABC SYSTEM PROTEIN A"/>
    <property type="match status" value="1"/>
</dbReference>
<dbReference type="PANTHER" id="PTHR43152:SF3">
    <property type="entry name" value="UVRABC SYSTEM PROTEIN A"/>
    <property type="match status" value="1"/>
</dbReference>
<dbReference type="Pfam" id="PF17755">
    <property type="entry name" value="UvrA_DNA-bind"/>
    <property type="match status" value="1"/>
</dbReference>
<dbReference type="Pfam" id="PF17760">
    <property type="entry name" value="UvrA_inter"/>
    <property type="match status" value="1"/>
</dbReference>
<dbReference type="SMART" id="SM00382">
    <property type="entry name" value="AAA"/>
    <property type="match status" value="2"/>
</dbReference>
<dbReference type="SUPFAM" id="SSF52540">
    <property type="entry name" value="P-loop containing nucleoside triphosphate hydrolases"/>
    <property type="match status" value="2"/>
</dbReference>
<dbReference type="PROSITE" id="PS00211">
    <property type="entry name" value="ABC_TRANSPORTER_1"/>
    <property type="match status" value="2"/>
</dbReference>
<dbReference type="PROSITE" id="PS50893">
    <property type="entry name" value="ABC_TRANSPORTER_2"/>
    <property type="match status" value="1"/>
</dbReference>
<reference key="1">
    <citation type="journal article" date="1998" name="Nature">
        <title>The complete genome of the hyperthermophilic bacterium Aquifex aeolicus.</title>
        <authorList>
            <person name="Deckert G."/>
            <person name="Warren P.V."/>
            <person name="Gaasterland T."/>
            <person name="Young W.G."/>
            <person name="Lenox A.L."/>
            <person name="Graham D.E."/>
            <person name="Overbeek R."/>
            <person name="Snead M.A."/>
            <person name="Keller M."/>
            <person name="Aujay M."/>
            <person name="Huber R."/>
            <person name="Feldman R.A."/>
            <person name="Short J.M."/>
            <person name="Olsen G.J."/>
            <person name="Swanson R.V."/>
        </authorList>
    </citation>
    <scope>NUCLEOTIDE SEQUENCE [LARGE SCALE GENOMIC DNA]</scope>
    <source>
        <strain>VF5</strain>
    </source>
</reference>
<evidence type="ECO:0000255" key="1">
    <source>
        <dbReference type="HAMAP-Rule" id="MF_00205"/>
    </source>
</evidence>
<protein>
    <recommendedName>
        <fullName evidence="1">UvrABC system protein A</fullName>
        <shortName evidence="1">UvrA protein</shortName>
    </recommendedName>
    <alternativeName>
        <fullName evidence="1">Excinuclease ABC subunit A</fullName>
    </alternativeName>
</protein>